<organism>
    <name type="scientific">Mus musculus</name>
    <name type="common">Mouse</name>
    <dbReference type="NCBI Taxonomy" id="10090"/>
    <lineage>
        <taxon>Eukaryota</taxon>
        <taxon>Metazoa</taxon>
        <taxon>Chordata</taxon>
        <taxon>Craniata</taxon>
        <taxon>Vertebrata</taxon>
        <taxon>Euteleostomi</taxon>
        <taxon>Mammalia</taxon>
        <taxon>Eutheria</taxon>
        <taxon>Euarchontoglires</taxon>
        <taxon>Glires</taxon>
        <taxon>Rodentia</taxon>
        <taxon>Myomorpha</taxon>
        <taxon>Muroidea</taxon>
        <taxon>Muridae</taxon>
        <taxon>Murinae</taxon>
        <taxon>Mus</taxon>
        <taxon>Mus</taxon>
    </lineage>
</organism>
<reference key="1">
    <citation type="journal article" date="2011" name="EMBO J.">
        <title>NYAP: a phosphoprotein family that links PI3K to WAVE1 signalling in neurons.</title>
        <authorList>
            <person name="Yokoyama K."/>
            <person name="Tezuka T."/>
            <person name="Kotani M."/>
            <person name="Nakazawa T."/>
            <person name="Hoshina N."/>
            <person name="Shimoda Y."/>
            <person name="Kakuta S."/>
            <person name="Sudo K."/>
            <person name="Watanabe K."/>
            <person name="Iwakura Y."/>
            <person name="Yamamoto T."/>
        </authorList>
    </citation>
    <scope>NUCLEOTIDE SEQUENCE [MRNA] (ISOFORM 2)</scope>
    <scope>FUNCTION</scope>
    <scope>INTERACTION WITH ACOT9; ARHGAP26; CYFIP1; NCKAP1 AND PIK3R2</scope>
    <scope>SUBUNIT</scope>
    <scope>TISSUE SPECIFICITY</scope>
    <scope>DEVELOPMENTAL STAGE</scope>
    <scope>DISRUPTION PHENOTYPE</scope>
    <scope>PHOSPHORYLATION</scope>
    <scope>MUTAGENESIS OF TYR-212 AND TYR-257</scope>
    <source>
        <tissue>Brain</tissue>
    </source>
</reference>
<reference key="2">
    <citation type="journal article" date="2005" name="Science">
        <title>The transcriptional landscape of the mammalian genome.</title>
        <authorList>
            <person name="Carninci P."/>
            <person name="Kasukawa T."/>
            <person name="Katayama S."/>
            <person name="Gough J."/>
            <person name="Frith M.C."/>
            <person name="Maeda N."/>
            <person name="Oyama R."/>
            <person name="Ravasi T."/>
            <person name="Lenhard B."/>
            <person name="Wells C."/>
            <person name="Kodzius R."/>
            <person name="Shimokawa K."/>
            <person name="Bajic V.B."/>
            <person name="Brenner S.E."/>
            <person name="Batalov S."/>
            <person name="Forrest A.R."/>
            <person name="Zavolan M."/>
            <person name="Davis M.J."/>
            <person name="Wilming L.G."/>
            <person name="Aidinis V."/>
            <person name="Allen J.E."/>
            <person name="Ambesi-Impiombato A."/>
            <person name="Apweiler R."/>
            <person name="Aturaliya R.N."/>
            <person name="Bailey T.L."/>
            <person name="Bansal M."/>
            <person name="Baxter L."/>
            <person name="Beisel K.W."/>
            <person name="Bersano T."/>
            <person name="Bono H."/>
            <person name="Chalk A.M."/>
            <person name="Chiu K.P."/>
            <person name="Choudhary V."/>
            <person name="Christoffels A."/>
            <person name="Clutterbuck D.R."/>
            <person name="Crowe M.L."/>
            <person name="Dalla E."/>
            <person name="Dalrymple B.P."/>
            <person name="de Bono B."/>
            <person name="Della Gatta G."/>
            <person name="di Bernardo D."/>
            <person name="Down T."/>
            <person name="Engstrom P."/>
            <person name="Fagiolini M."/>
            <person name="Faulkner G."/>
            <person name="Fletcher C.F."/>
            <person name="Fukushima T."/>
            <person name="Furuno M."/>
            <person name="Futaki S."/>
            <person name="Gariboldi M."/>
            <person name="Georgii-Hemming P."/>
            <person name="Gingeras T.R."/>
            <person name="Gojobori T."/>
            <person name="Green R.E."/>
            <person name="Gustincich S."/>
            <person name="Harbers M."/>
            <person name="Hayashi Y."/>
            <person name="Hensch T.K."/>
            <person name="Hirokawa N."/>
            <person name="Hill D."/>
            <person name="Huminiecki L."/>
            <person name="Iacono M."/>
            <person name="Ikeo K."/>
            <person name="Iwama A."/>
            <person name="Ishikawa T."/>
            <person name="Jakt M."/>
            <person name="Kanapin A."/>
            <person name="Katoh M."/>
            <person name="Kawasawa Y."/>
            <person name="Kelso J."/>
            <person name="Kitamura H."/>
            <person name="Kitano H."/>
            <person name="Kollias G."/>
            <person name="Krishnan S.P."/>
            <person name="Kruger A."/>
            <person name="Kummerfeld S.K."/>
            <person name="Kurochkin I.V."/>
            <person name="Lareau L.F."/>
            <person name="Lazarevic D."/>
            <person name="Lipovich L."/>
            <person name="Liu J."/>
            <person name="Liuni S."/>
            <person name="McWilliam S."/>
            <person name="Madan Babu M."/>
            <person name="Madera M."/>
            <person name="Marchionni L."/>
            <person name="Matsuda H."/>
            <person name="Matsuzawa S."/>
            <person name="Miki H."/>
            <person name="Mignone F."/>
            <person name="Miyake S."/>
            <person name="Morris K."/>
            <person name="Mottagui-Tabar S."/>
            <person name="Mulder N."/>
            <person name="Nakano N."/>
            <person name="Nakauchi H."/>
            <person name="Ng P."/>
            <person name="Nilsson R."/>
            <person name="Nishiguchi S."/>
            <person name="Nishikawa S."/>
            <person name="Nori F."/>
            <person name="Ohara O."/>
            <person name="Okazaki Y."/>
            <person name="Orlando V."/>
            <person name="Pang K.C."/>
            <person name="Pavan W.J."/>
            <person name="Pavesi G."/>
            <person name="Pesole G."/>
            <person name="Petrovsky N."/>
            <person name="Piazza S."/>
            <person name="Reed J."/>
            <person name="Reid J.F."/>
            <person name="Ring B.Z."/>
            <person name="Ringwald M."/>
            <person name="Rost B."/>
            <person name="Ruan Y."/>
            <person name="Salzberg S.L."/>
            <person name="Sandelin A."/>
            <person name="Schneider C."/>
            <person name="Schoenbach C."/>
            <person name="Sekiguchi K."/>
            <person name="Semple C.A."/>
            <person name="Seno S."/>
            <person name="Sessa L."/>
            <person name="Sheng Y."/>
            <person name="Shibata Y."/>
            <person name="Shimada H."/>
            <person name="Shimada K."/>
            <person name="Silva D."/>
            <person name="Sinclair B."/>
            <person name="Sperling S."/>
            <person name="Stupka E."/>
            <person name="Sugiura K."/>
            <person name="Sultana R."/>
            <person name="Takenaka Y."/>
            <person name="Taki K."/>
            <person name="Tammoja K."/>
            <person name="Tan S.L."/>
            <person name="Tang S."/>
            <person name="Taylor M.S."/>
            <person name="Tegner J."/>
            <person name="Teichmann S.A."/>
            <person name="Ueda H.R."/>
            <person name="van Nimwegen E."/>
            <person name="Verardo R."/>
            <person name="Wei C.L."/>
            <person name="Yagi K."/>
            <person name="Yamanishi H."/>
            <person name="Zabarovsky E."/>
            <person name="Zhu S."/>
            <person name="Zimmer A."/>
            <person name="Hide W."/>
            <person name="Bult C."/>
            <person name="Grimmond S.M."/>
            <person name="Teasdale R.D."/>
            <person name="Liu E.T."/>
            <person name="Brusic V."/>
            <person name="Quackenbush J."/>
            <person name="Wahlestedt C."/>
            <person name="Mattick J.S."/>
            <person name="Hume D.A."/>
            <person name="Kai C."/>
            <person name="Sasaki D."/>
            <person name="Tomaru Y."/>
            <person name="Fukuda S."/>
            <person name="Kanamori-Katayama M."/>
            <person name="Suzuki M."/>
            <person name="Aoki J."/>
            <person name="Arakawa T."/>
            <person name="Iida J."/>
            <person name="Imamura K."/>
            <person name="Itoh M."/>
            <person name="Kato T."/>
            <person name="Kawaji H."/>
            <person name="Kawagashira N."/>
            <person name="Kawashima T."/>
            <person name="Kojima M."/>
            <person name="Kondo S."/>
            <person name="Konno H."/>
            <person name="Nakano K."/>
            <person name="Ninomiya N."/>
            <person name="Nishio T."/>
            <person name="Okada M."/>
            <person name="Plessy C."/>
            <person name="Shibata K."/>
            <person name="Shiraki T."/>
            <person name="Suzuki S."/>
            <person name="Tagami M."/>
            <person name="Waki K."/>
            <person name="Watahiki A."/>
            <person name="Okamura-Oho Y."/>
            <person name="Suzuki H."/>
            <person name="Kawai J."/>
            <person name="Hayashizaki Y."/>
        </authorList>
    </citation>
    <scope>NUCLEOTIDE SEQUENCE [LARGE SCALE MRNA] (ISOFORMS 2 AND 3)</scope>
    <source>
        <strain>C57BL/6J</strain>
        <tissue>Corpora quadrigemina</tissue>
        <tissue>Olfactory bulb</tissue>
        <tissue>Sympathetic ganglion</tissue>
    </source>
</reference>
<reference key="3">
    <citation type="submission" date="2005-07" db="EMBL/GenBank/DDBJ databases">
        <authorList>
            <person name="Mural R.J."/>
            <person name="Adams M.D."/>
            <person name="Myers E.W."/>
            <person name="Smith H.O."/>
            <person name="Venter J.C."/>
        </authorList>
    </citation>
    <scope>NUCLEOTIDE SEQUENCE [LARGE SCALE GENOMIC DNA]</scope>
</reference>
<reference key="4">
    <citation type="journal article" date="2004" name="Genome Res.">
        <title>The status, quality, and expansion of the NIH full-length cDNA project: the Mammalian Gene Collection (MGC).</title>
        <authorList>
            <consortium name="The MGC Project Team"/>
        </authorList>
    </citation>
    <scope>NUCLEOTIDE SEQUENCE [LARGE SCALE MRNA] (ISOFORM 1)</scope>
    <source>
        <strain>C57BL/6J</strain>
        <tissue>Brain</tissue>
    </source>
</reference>
<reference key="5">
    <citation type="journal article" date="2010" name="Cell">
        <title>A tissue-specific atlas of mouse protein phosphorylation and expression.</title>
        <authorList>
            <person name="Huttlin E.L."/>
            <person name="Jedrychowski M.P."/>
            <person name="Elias J.E."/>
            <person name="Goswami T."/>
            <person name="Rad R."/>
            <person name="Beausoleil S.A."/>
            <person name="Villen J."/>
            <person name="Haas W."/>
            <person name="Sowa M.E."/>
            <person name="Gygi S.P."/>
        </authorList>
    </citation>
    <scope>IDENTIFICATION BY MASS SPECTROMETRY [LARGE SCALE ANALYSIS]</scope>
    <source>
        <tissue>Brain</tissue>
    </source>
</reference>
<keyword id="KW-0025">Alternative splicing</keyword>
<keyword id="KW-0597">Phosphoprotein</keyword>
<keyword id="KW-1185">Reference proteome</keyword>
<gene>
    <name type="primary">Nyap1</name>
</gene>
<name>NYAP1_MOUSE</name>
<proteinExistence type="evidence at protein level"/>
<feature type="chain" id="PRO_0000320930" description="Neuronal tyrosine-phosphorylated phosphoinositide-3-kinase adapter 1">
    <location>
        <begin position="1"/>
        <end position="833"/>
    </location>
</feature>
<feature type="region of interest" description="Disordered" evidence="1">
    <location>
        <begin position="1"/>
        <end position="45"/>
    </location>
</feature>
<feature type="region of interest" description="Disordered" evidence="1">
    <location>
        <begin position="64"/>
        <end position="191"/>
    </location>
</feature>
<feature type="region of interest" description="Involved in CYFIP1- and NCKAP1-binding">
    <location>
        <begin position="76"/>
        <end position="181"/>
    </location>
</feature>
<feature type="region of interest" description="Disordered" evidence="1">
    <location>
        <begin position="219"/>
        <end position="423"/>
    </location>
</feature>
<feature type="region of interest" description="Disordered" evidence="1">
    <location>
        <begin position="645"/>
        <end position="674"/>
    </location>
</feature>
<feature type="region of interest" description="Disordered" evidence="1">
    <location>
        <begin position="736"/>
        <end position="765"/>
    </location>
</feature>
<feature type="compositionally biased region" description="Basic and acidic residues" evidence="1">
    <location>
        <begin position="8"/>
        <end position="25"/>
    </location>
</feature>
<feature type="compositionally biased region" description="Basic residues" evidence="1">
    <location>
        <begin position="111"/>
        <end position="120"/>
    </location>
</feature>
<feature type="compositionally biased region" description="Polar residues" evidence="1">
    <location>
        <begin position="162"/>
        <end position="171"/>
    </location>
</feature>
<feature type="compositionally biased region" description="Gly residues" evidence="1">
    <location>
        <begin position="220"/>
        <end position="239"/>
    </location>
</feature>
<feature type="compositionally biased region" description="Acidic residues" evidence="1">
    <location>
        <begin position="248"/>
        <end position="257"/>
    </location>
</feature>
<feature type="compositionally biased region" description="Pro residues" evidence="1">
    <location>
        <begin position="275"/>
        <end position="285"/>
    </location>
</feature>
<feature type="splice variant" id="VSP_031747" description="In isoform 3." evidence="3">
    <location>
        <begin position="1"/>
        <end position="259"/>
    </location>
</feature>
<feature type="splice variant" id="VSP_031748" description="In isoform 2 and isoform 3." evidence="3 4">
    <original>TE</original>
    <variation>K</variation>
    <location>
        <begin position="644"/>
        <end position="645"/>
    </location>
</feature>
<feature type="mutagenesis site" description="Abolishes binding to PIK3R2. Slight reduction of phosphorylation in HEK293T cells. Abolishes phosphorylation in HEK293T cells and in neurons; when associated with F-257." evidence="2">
    <original>Y</original>
    <variation>F</variation>
    <location>
        <position position="212"/>
    </location>
</feature>
<feature type="mutagenesis site" description="Reduced binding to PIK3R2. Slight reduction of phosphorylation in HEK293T cells. Abolishes phosphorylation in HEK293T cells and neurons; when associated with F-212." evidence="2">
    <original>Y</original>
    <variation>F</variation>
    <location>
        <position position="257"/>
    </location>
</feature>
<dbReference type="EMBL" id="AB429289">
    <property type="protein sequence ID" value="BAJ19138.1"/>
    <property type="molecule type" value="mRNA"/>
</dbReference>
<dbReference type="EMBL" id="AK032567">
    <property type="protein sequence ID" value="BAC27928.1"/>
    <property type="molecule type" value="mRNA"/>
</dbReference>
<dbReference type="EMBL" id="AK080821">
    <property type="protein sequence ID" value="BAC38036.1"/>
    <property type="status" value="ALT_FRAME"/>
    <property type="molecule type" value="mRNA"/>
</dbReference>
<dbReference type="EMBL" id="AK148980">
    <property type="protein sequence ID" value="BAE28710.1"/>
    <property type="molecule type" value="mRNA"/>
</dbReference>
<dbReference type="EMBL" id="CH466529">
    <property type="protein sequence ID" value="EDL19242.1"/>
    <property type="molecule type" value="Genomic_DNA"/>
</dbReference>
<dbReference type="EMBL" id="BC057372">
    <property type="protein sequence ID" value="AAH57372.1"/>
    <property type="molecule type" value="mRNA"/>
</dbReference>
<dbReference type="CCDS" id="CCDS19775.1">
    <molecule id="Q6PFX7-1"/>
</dbReference>
<dbReference type="CCDS" id="CCDS84980.1">
    <molecule id="Q6PFX7-2"/>
</dbReference>
<dbReference type="RefSeq" id="NP_001334434.1">
    <molecule id="Q6PFX7-2"/>
    <property type="nucleotide sequence ID" value="NM_001347505.1"/>
</dbReference>
<dbReference type="RefSeq" id="NP_780730.2">
    <molecule id="Q6PFX7-1"/>
    <property type="nucleotide sequence ID" value="NM_175521.3"/>
</dbReference>
<dbReference type="RefSeq" id="XP_006504639.1">
    <molecule id="Q6PFX7-2"/>
    <property type="nucleotide sequence ID" value="XM_006504576.5"/>
</dbReference>
<dbReference type="RefSeq" id="XP_006504640.1">
    <molecule id="Q6PFX7-2"/>
    <property type="nucleotide sequence ID" value="XM_006504577.5"/>
</dbReference>
<dbReference type="BioGRID" id="232498">
    <property type="interactions" value="5"/>
</dbReference>
<dbReference type="FunCoup" id="Q6PFX7">
    <property type="interactions" value="749"/>
</dbReference>
<dbReference type="IntAct" id="Q6PFX7">
    <property type="interactions" value="8"/>
</dbReference>
<dbReference type="MINT" id="Q6PFX7"/>
<dbReference type="STRING" id="10090.ENSMUSP00000113397"/>
<dbReference type="GlyGen" id="Q6PFX7">
    <property type="glycosylation" value="4 sites, 1 O-linked glycan (2 sites)"/>
</dbReference>
<dbReference type="iPTMnet" id="Q6PFX7"/>
<dbReference type="PhosphoSitePlus" id="Q6PFX7"/>
<dbReference type="jPOST" id="Q6PFX7"/>
<dbReference type="PaxDb" id="10090-ENSMUSP00000113397"/>
<dbReference type="ProteomicsDB" id="293793">
    <molecule id="Q6PFX7-1"/>
</dbReference>
<dbReference type="ProteomicsDB" id="293794">
    <molecule id="Q6PFX7-2"/>
</dbReference>
<dbReference type="ProteomicsDB" id="293795">
    <molecule id="Q6PFX7-3"/>
</dbReference>
<dbReference type="Antibodypedia" id="16487">
    <property type="antibodies" value="10 antibodies from 9 providers"/>
</dbReference>
<dbReference type="DNASU" id="243300"/>
<dbReference type="Ensembl" id="ENSMUST00000061789.14">
    <molecule id="Q6PFX7-1"/>
    <property type="protein sequence ID" value="ENSMUSP00000058217.8"/>
    <property type="gene ID" value="ENSMUSG00000045348.17"/>
</dbReference>
<dbReference type="Ensembl" id="ENSMUST00000118326.8">
    <molecule id="Q6PFX7-1"/>
    <property type="protein sequence ID" value="ENSMUSP00000113397.2"/>
    <property type="gene ID" value="ENSMUSG00000045348.17"/>
</dbReference>
<dbReference type="Ensembl" id="ENSMUST00000212152.2">
    <molecule id="Q6PFX7-2"/>
    <property type="protein sequence ID" value="ENSMUSP00000148318.2"/>
    <property type="gene ID" value="ENSMUSG00000045348.17"/>
</dbReference>
<dbReference type="GeneID" id="243300"/>
<dbReference type="KEGG" id="mmu:243300"/>
<dbReference type="UCSC" id="uc009adq.1">
    <molecule id="Q6PFX7-1"/>
    <property type="organism name" value="mouse"/>
</dbReference>
<dbReference type="UCSC" id="uc009adr.1">
    <molecule id="Q6PFX7-2"/>
    <property type="organism name" value="mouse"/>
</dbReference>
<dbReference type="AGR" id="MGI:2443880"/>
<dbReference type="CTD" id="222950"/>
<dbReference type="MGI" id="MGI:2443880">
    <property type="gene designation" value="Nyap1"/>
</dbReference>
<dbReference type="VEuPathDB" id="HostDB:ENSMUSG00000045348"/>
<dbReference type="eggNOG" id="ENOG502QRSX">
    <property type="taxonomic scope" value="Eukaryota"/>
</dbReference>
<dbReference type="GeneTree" id="ENSGT00890000139453"/>
<dbReference type="HOGENOM" id="CLU_012558_0_0_1"/>
<dbReference type="InParanoid" id="Q6PFX7"/>
<dbReference type="OMA" id="MICPKAV"/>
<dbReference type="OrthoDB" id="9832999at2759"/>
<dbReference type="PhylomeDB" id="Q6PFX7"/>
<dbReference type="BioGRID-ORCS" id="243300">
    <property type="hits" value="2 hits in 76 CRISPR screens"/>
</dbReference>
<dbReference type="CD-CODE" id="CE726F99">
    <property type="entry name" value="Postsynaptic density"/>
</dbReference>
<dbReference type="ChiTaRS" id="Nyap1">
    <property type="organism name" value="mouse"/>
</dbReference>
<dbReference type="PRO" id="PR:Q6PFX7"/>
<dbReference type="Proteomes" id="UP000000589">
    <property type="component" value="Chromosome 5"/>
</dbReference>
<dbReference type="RNAct" id="Q6PFX7">
    <property type="molecule type" value="protein"/>
</dbReference>
<dbReference type="Bgee" id="ENSMUSG00000045348">
    <property type="expression patterns" value="Expressed in cortical plate and 167 other cell types or tissues"/>
</dbReference>
<dbReference type="ExpressionAtlas" id="Q6PFX7">
    <property type="expression patterns" value="baseline and differential"/>
</dbReference>
<dbReference type="GO" id="GO:0048812">
    <property type="term" value="P:neuron projection morphogenesis"/>
    <property type="evidence" value="ECO:0000314"/>
    <property type="project" value="UniProtKB"/>
</dbReference>
<dbReference type="GO" id="GO:0043491">
    <property type="term" value="P:phosphatidylinositol 3-kinase/protein kinase B signal transduction"/>
    <property type="evidence" value="ECO:0000314"/>
    <property type="project" value="UniProtKB"/>
</dbReference>
<dbReference type="InterPro" id="IPR026722">
    <property type="entry name" value="NYAP1/NYAP2"/>
</dbReference>
<dbReference type="InterPro" id="IPR029353">
    <property type="entry name" value="NYAP_C"/>
</dbReference>
<dbReference type="InterPro" id="IPR039482">
    <property type="entry name" value="NYAP_N"/>
</dbReference>
<dbReference type="PANTHER" id="PTHR22633:SF2">
    <property type="entry name" value="NEURONAL TYROSINE-PHOSPHORYLATED PHOSPHOINOSITIDE-3-KINASE ADAPTER 1"/>
    <property type="match status" value="1"/>
</dbReference>
<dbReference type="PANTHER" id="PTHR22633">
    <property type="entry name" value="NEURONAL TYROSINE-PHOSPHORYLATED PHOSPHOINOSITIDE-3-KINASE ADAPTER 2-RELATED"/>
    <property type="match status" value="1"/>
</dbReference>
<dbReference type="Pfam" id="PF15452">
    <property type="entry name" value="NYAP_C"/>
    <property type="match status" value="1"/>
</dbReference>
<dbReference type="Pfam" id="PF15439">
    <property type="entry name" value="NYAP_N"/>
    <property type="match status" value="1"/>
</dbReference>
<accession>Q6PFX7</accession>
<accession>E1CB66</accession>
<accession>Q3UF51</accession>
<accession>Q8BNR4</accession>
<accession>Q8CCL6</accession>
<evidence type="ECO:0000256" key="1">
    <source>
        <dbReference type="SAM" id="MobiDB-lite"/>
    </source>
</evidence>
<evidence type="ECO:0000269" key="2">
    <source>
    </source>
</evidence>
<evidence type="ECO:0000303" key="3">
    <source>
    </source>
</evidence>
<evidence type="ECO:0000303" key="4">
    <source>
    </source>
</evidence>
<evidence type="ECO:0000305" key="5"/>
<protein>
    <recommendedName>
        <fullName>Neuronal tyrosine-phosphorylated phosphoinositide-3-kinase adapter 1</fullName>
    </recommendedName>
</protein>
<comment type="function">
    <text evidence="2">Activates PI3K and concomitantly recruits the WAVE1 complex to the close vicinity of PI3K and regulates neuronal morphogenesis.</text>
</comment>
<comment type="subunit">
    <text evidence="2">Interacts with ACOT9, ARHGAP26 and PIK3R2. Interacts with components of the WAVE1 complex, CYFIP1 and NCKAP1; this interaction mediates PI3K-WAVE1 association and actin cytoskeleton remodeling.</text>
</comment>
<comment type="interaction">
    <interactant intactId="EBI-7447489">
        <id>Q6PFX7</id>
    </interactant>
    <interactant intactId="EBI-79464">
        <id>P27986</id>
        <label>PIK3R1</label>
    </interactant>
    <organismsDiffer>true</organismsDiffer>
    <experiments>4</experiments>
</comment>
<comment type="alternative products">
    <event type="alternative splicing"/>
    <isoform>
        <id>Q6PFX7-1</id>
        <name>1</name>
        <sequence type="displayed"/>
    </isoform>
    <isoform>
        <id>Q6PFX7-2</id>
        <name>2</name>
        <sequence type="described" ref="VSP_031748"/>
    </isoform>
    <isoform>
        <id>Q6PFX7-3</id>
        <name>3</name>
        <sequence type="described" ref="VSP_031747 VSP_031748"/>
    </isoform>
</comment>
<comment type="tissue specificity">
    <text evidence="2">Expressed predominantly in brain where it is present in the neurons, but not in astrocytes or oligodendrites.</text>
</comment>
<comment type="developmental stage">
    <text evidence="2">Expression first detected in the cortical plate as early as 14 dpc, peaks in the middle neocortex at postnatal day 1 and then gradually decreases. At postnatal day 1, also expressed in the striatum, but not in the olfactory bulb.</text>
</comment>
<comment type="PTM">
    <text evidence="2">Phosphorylated on tyrosine residues by FYN upon stimulation with CNTN5. Phosphorylation begins at 14 dpc, reaches a peak during perinatal days in brain, then gradually decreases.</text>
</comment>
<comment type="disruption phenotype">
    <text evidence="2">Triple knockout mice NYAP1/NYAP2/MYO16 are fertile and appear healthy. However, compared to wild-type mice they show a clear reduction in brain size, exhibiting a reduction in the size of the cortex and striatum, but not the olfactory bulb or corpus callosum. The total neurite length of neurons in these mice is also significantly shorter.</text>
</comment>
<comment type="similarity">
    <text evidence="5">Belongs to the NYAP family.</text>
</comment>
<comment type="sequence caution" evidence="5">
    <conflict type="frameshift">
        <sequence resource="EMBL-CDS" id="BAC38036"/>
    </conflict>
</comment>
<sequence length="833" mass="87668">MNLLYRKTKLEWRQHKEEEAKRSSSKEAAPTGPVGPGAVPGPGVRVRDIASLRRSLRMGFMTMPASQEHTPHPCRSTMAPRSLSCHSVGSMDSVGGGPGGGLTEDSSTRRPPAKPRRHPSTKLSMAGPGAETPPSKKAGSQKPAPECRESSRKVPPQKPRRSPNTQLSVSFDESCAPAPSPRGANLPLQRLSRASRITGDLDAGAQEEEPVYIEMVGDVFRGGGRSGGGLAGPPLGSGGPTPPAAADSDSEDSEAIYEEMKYPLPEEAGDGRANGPPPLTAPSPPQQTHILQPHPHPHRRPASALPSRRDGTPTKTTPCEIPPPFPNLLQHRPPLLAFPQAKSASRAPGDGVSRLPVLCHSKEPAGSTPAPQVPARERETPPLPPPPPAANLLLLGPSGRARSHSTPLPPQGSGQTRGERELPNSHSMICPKAAGVPAAHPAPAALLPGPPKDKAVSYTMVYSAVKVTTHSVLPAGPPLGVGEPKTEEISVLHGMLCASSRPPVPGKSSPHSGAMGSAAGVLHHRSCLASPHSLPDPTGGSLTPLWTYPATAAGLKRPPAYDSLKAGGVLNKGCGMGAPSPMVKIQLQEQGTDGGAFASISCAHVIASAGTPEEEEEMGAAFGAGWALQRKVLYGGRKAKEVDTEEDGARAWNGSTEGPGKVEHEDRGPVPSGIPVRSQGAEGLLARIHHDRGGSRTALPVPCQTFPACHRNGDFTGGYRLGRSASTSGVRQAALHTPRPCSQPRDALSQTHPVLPLPLPPQPARERDGKLLEVIERKRCVCKEIKARHRPDRGLCKQESMPILPSWRRVPEPRKSGTPPCRRQHTVLWDTAI</sequence>